<gene>
    <name evidence="1" type="primary">fabH</name>
    <name type="ordered locus">HPAG1_0196</name>
</gene>
<evidence type="ECO:0000255" key="1">
    <source>
        <dbReference type="HAMAP-Rule" id="MF_01815"/>
    </source>
</evidence>
<organism>
    <name type="scientific">Helicobacter pylori (strain HPAG1)</name>
    <dbReference type="NCBI Taxonomy" id="357544"/>
    <lineage>
        <taxon>Bacteria</taxon>
        <taxon>Pseudomonadati</taxon>
        <taxon>Campylobacterota</taxon>
        <taxon>Epsilonproteobacteria</taxon>
        <taxon>Campylobacterales</taxon>
        <taxon>Helicobacteraceae</taxon>
        <taxon>Helicobacter</taxon>
    </lineage>
</organism>
<keyword id="KW-0012">Acyltransferase</keyword>
<keyword id="KW-0963">Cytoplasm</keyword>
<keyword id="KW-0275">Fatty acid biosynthesis</keyword>
<keyword id="KW-0276">Fatty acid metabolism</keyword>
<keyword id="KW-0444">Lipid biosynthesis</keyword>
<keyword id="KW-0443">Lipid metabolism</keyword>
<keyword id="KW-0511">Multifunctional enzyme</keyword>
<keyword id="KW-0808">Transferase</keyword>
<accession>Q1CUV9</accession>
<name>FABH_HELPH</name>
<sequence length="330" mass="36352">MEFYASLKSIAMHVPSERVKNAEFQQFLDTSDEWIEKRTGIKERRFASNEEKSSDLGVIAAKQAIERAHLTPKDIDLVVVATLSPDFLAMPSTACVLSAKLGIENKPAFDISAACTGFIYLLSVAKAYVESGMCENVLIVGAEKTSSVLDFKDRGTCILFGDGAGACVIGRTKRLKESILDVQISANGNFSNYLYTPRTLKPTPFNSKEEALEPFLCMKGNEVFKLAVKTLLKDVETILEKNALKPEDVRLFIPHQANFRIIQAVREHLDFKDEQVVLTVHKYGNTSAASIPMAMCEAYEEGRLKKGDLMLLDAFGGGLTWGSALVYFGG</sequence>
<comment type="function">
    <text evidence="1">Catalyzes the condensation reaction of fatty acid synthesis by the addition to an acyl acceptor of two carbons from malonyl-ACP. Catalyzes the first condensation reaction which initiates fatty acid synthesis and may therefore play a role in governing the total rate of fatty acid production. Possesses both acetoacetyl-ACP synthase and acetyl transacylase activities. Its substrate specificity determines the biosynthesis of branched-chain and/or straight-chain of fatty acids.</text>
</comment>
<comment type="catalytic activity">
    <reaction evidence="1">
        <text>malonyl-[ACP] + acetyl-CoA + H(+) = 3-oxobutanoyl-[ACP] + CO2 + CoA</text>
        <dbReference type="Rhea" id="RHEA:12080"/>
        <dbReference type="Rhea" id="RHEA-COMP:9623"/>
        <dbReference type="Rhea" id="RHEA-COMP:9625"/>
        <dbReference type="ChEBI" id="CHEBI:15378"/>
        <dbReference type="ChEBI" id="CHEBI:16526"/>
        <dbReference type="ChEBI" id="CHEBI:57287"/>
        <dbReference type="ChEBI" id="CHEBI:57288"/>
        <dbReference type="ChEBI" id="CHEBI:78449"/>
        <dbReference type="ChEBI" id="CHEBI:78450"/>
        <dbReference type="EC" id="2.3.1.180"/>
    </reaction>
</comment>
<comment type="pathway">
    <text evidence="1">Lipid metabolism; fatty acid biosynthesis.</text>
</comment>
<comment type="subunit">
    <text evidence="1">Homodimer.</text>
</comment>
<comment type="subcellular location">
    <subcellularLocation>
        <location evidence="1">Cytoplasm</location>
    </subcellularLocation>
</comment>
<comment type="domain">
    <text evidence="1">The last Arg residue of the ACP-binding site is essential for the weak association between ACP/AcpP and FabH.</text>
</comment>
<comment type="similarity">
    <text evidence="1">Belongs to the thiolase-like superfamily. FabH family.</text>
</comment>
<protein>
    <recommendedName>
        <fullName evidence="1">Beta-ketoacyl-[acyl-carrier-protein] synthase III</fullName>
        <shortName evidence="1">Beta-ketoacyl-ACP synthase III</shortName>
        <shortName evidence="1">KAS III</shortName>
        <ecNumber evidence="1">2.3.1.180</ecNumber>
    </recommendedName>
    <alternativeName>
        <fullName evidence="1">3-oxoacyl-[acyl-carrier-protein] synthase 3</fullName>
    </alternativeName>
    <alternativeName>
        <fullName evidence="1">3-oxoacyl-[acyl-carrier-protein] synthase III</fullName>
    </alternativeName>
</protein>
<dbReference type="EC" id="2.3.1.180" evidence="1"/>
<dbReference type="EMBL" id="CP000241">
    <property type="protein sequence ID" value="ABF84263.1"/>
    <property type="molecule type" value="Genomic_DNA"/>
</dbReference>
<dbReference type="RefSeq" id="WP_000397853.1">
    <property type="nucleotide sequence ID" value="NC_008086.1"/>
</dbReference>
<dbReference type="SMR" id="Q1CUV9"/>
<dbReference type="KEGG" id="hpa:HPAG1_0196"/>
<dbReference type="HOGENOM" id="CLU_039592_4_1_7"/>
<dbReference type="UniPathway" id="UPA00094"/>
<dbReference type="GO" id="GO:0005737">
    <property type="term" value="C:cytoplasm"/>
    <property type="evidence" value="ECO:0007669"/>
    <property type="project" value="UniProtKB-SubCell"/>
</dbReference>
<dbReference type="GO" id="GO:0004315">
    <property type="term" value="F:3-oxoacyl-[acyl-carrier-protein] synthase activity"/>
    <property type="evidence" value="ECO:0007669"/>
    <property type="project" value="InterPro"/>
</dbReference>
<dbReference type="GO" id="GO:0033818">
    <property type="term" value="F:beta-ketoacyl-acyl-carrier-protein synthase III activity"/>
    <property type="evidence" value="ECO:0007669"/>
    <property type="project" value="UniProtKB-UniRule"/>
</dbReference>
<dbReference type="GO" id="GO:0006633">
    <property type="term" value="P:fatty acid biosynthetic process"/>
    <property type="evidence" value="ECO:0007669"/>
    <property type="project" value="UniProtKB-UniRule"/>
</dbReference>
<dbReference type="GO" id="GO:0044550">
    <property type="term" value="P:secondary metabolite biosynthetic process"/>
    <property type="evidence" value="ECO:0007669"/>
    <property type="project" value="TreeGrafter"/>
</dbReference>
<dbReference type="CDD" id="cd00830">
    <property type="entry name" value="KAS_III"/>
    <property type="match status" value="1"/>
</dbReference>
<dbReference type="FunFam" id="3.40.47.10:FF:000004">
    <property type="entry name" value="3-oxoacyl-[acyl-carrier-protein] synthase 3"/>
    <property type="match status" value="1"/>
</dbReference>
<dbReference type="Gene3D" id="3.40.47.10">
    <property type="match status" value="1"/>
</dbReference>
<dbReference type="HAMAP" id="MF_01815">
    <property type="entry name" value="FabH"/>
    <property type="match status" value="1"/>
</dbReference>
<dbReference type="InterPro" id="IPR013747">
    <property type="entry name" value="ACP_syn_III_C"/>
</dbReference>
<dbReference type="InterPro" id="IPR013751">
    <property type="entry name" value="ACP_syn_III_N"/>
</dbReference>
<dbReference type="InterPro" id="IPR004655">
    <property type="entry name" value="FabH"/>
</dbReference>
<dbReference type="InterPro" id="IPR016039">
    <property type="entry name" value="Thiolase-like"/>
</dbReference>
<dbReference type="NCBIfam" id="TIGR00747">
    <property type="entry name" value="fabH"/>
    <property type="match status" value="1"/>
</dbReference>
<dbReference type="NCBIfam" id="NF006829">
    <property type="entry name" value="PRK09352.1"/>
    <property type="match status" value="1"/>
</dbReference>
<dbReference type="PANTHER" id="PTHR34069">
    <property type="entry name" value="3-OXOACYL-[ACYL-CARRIER-PROTEIN] SYNTHASE 3"/>
    <property type="match status" value="1"/>
</dbReference>
<dbReference type="PANTHER" id="PTHR34069:SF2">
    <property type="entry name" value="BETA-KETOACYL-[ACYL-CARRIER-PROTEIN] SYNTHASE III"/>
    <property type="match status" value="1"/>
</dbReference>
<dbReference type="Pfam" id="PF08545">
    <property type="entry name" value="ACP_syn_III"/>
    <property type="match status" value="1"/>
</dbReference>
<dbReference type="Pfam" id="PF08541">
    <property type="entry name" value="ACP_syn_III_C"/>
    <property type="match status" value="1"/>
</dbReference>
<dbReference type="SUPFAM" id="SSF53901">
    <property type="entry name" value="Thiolase-like"/>
    <property type="match status" value="1"/>
</dbReference>
<feature type="chain" id="PRO_1000056367" description="Beta-ketoacyl-[acyl-carrier-protein] synthase III">
    <location>
        <begin position="1"/>
        <end position="330"/>
    </location>
</feature>
<feature type="region of interest" description="ACP-binding" evidence="1">
    <location>
        <begin position="256"/>
        <end position="260"/>
    </location>
</feature>
<feature type="active site" evidence="1">
    <location>
        <position position="115"/>
    </location>
</feature>
<feature type="active site" evidence="1">
    <location>
        <position position="255"/>
    </location>
</feature>
<feature type="active site" evidence="1">
    <location>
        <position position="285"/>
    </location>
</feature>
<reference key="1">
    <citation type="journal article" date="2006" name="Proc. Natl. Acad. Sci. U.S.A.">
        <title>The complete genome sequence of a chronic atrophic gastritis Helicobacter pylori strain: evolution during disease progression.</title>
        <authorList>
            <person name="Oh J.D."/>
            <person name="Kling-Baeckhed H."/>
            <person name="Giannakis M."/>
            <person name="Xu J."/>
            <person name="Fulton R.S."/>
            <person name="Fulton L.A."/>
            <person name="Cordum H.S."/>
            <person name="Wang C."/>
            <person name="Elliott G."/>
            <person name="Edwards J."/>
            <person name="Mardis E.R."/>
            <person name="Engstrand L.G."/>
            <person name="Gordon J.I."/>
        </authorList>
    </citation>
    <scope>NUCLEOTIDE SEQUENCE [LARGE SCALE GENOMIC DNA]</scope>
    <source>
        <strain>HPAG1</strain>
    </source>
</reference>
<proteinExistence type="inferred from homology"/>